<organism>
    <name type="scientific">Coxiella burnetii (strain RSA 493 / Nine Mile phase I)</name>
    <dbReference type="NCBI Taxonomy" id="227377"/>
    <lineage>
        <taxon>Bacteria</taxon>
        <taxon>Pseudomonadati</taxon>
        <taxon>Pseudomonadota</taxon>
        <taxon>Gammaproteobacteria</taxon>
        <taxon>Legionellales</taxon>
        <taxon>Coxiellaceae</taxon>
        <taxon>Coxiella</taxon>
    </lineage>
</organism>
<protein>
    <recommendedName>
        <fullName evidence="1">2-dehydro-3-deoxyphosphooctonate aldolase</fullName>
        <ecNumber evidence="1">2.5.1.55</ecNumber>
    </recommendedName>
    <alternativeName>
        <fullName evidence="1">3-deoxy-D-manno-octulosonic acid 8-phosphate synthase</fullName>
    </alternativeName>
    <alternativeName>
        <fullName evidence="1">KDO-8-phosphate synthase</fullName>
        <shortName evidence="1">KDO 8-P synthase</shortName>
        <shortName evidence="1">KDOPS</shortName>
    </alternativeName>
    <alternativeName>
        <fullName evidence="1">Phospho-2-dehydro-3-deoxyoctonate aldolase</fullName>
    </alternativeName>
</protein>
<sequence length="280" mass="30507">MLMQIADFEIGLNNPLFLIAGPCVIESEALVMDVAGELKSITQQLDMPFIFKASFDKANRSSHLSYRGPGIEKGLTILEKVKKTLEVPIITDVHEDTPLQEVAAVVDVLQTPAFLCRQSNFIRSVAACGKPVNIKKGQFLAPWEMKQVVAKAWATGNKKIMVCERGYSFGYNNLISDMRALAILRETACPVIFDATHSVQLPGGHGTNSGGQREFVPVLARAATAAGIAGIFMETHPDPDRALSDGPNSWPLAKMQPLLETLKELDKVVKNAGFLEQSSE</sequence>
<proteinExistence type="inferred from homology"/>
<name>KDSA_COXBU</name>
<gene>
    <name evidence="1" type="primary">kdsA</name>
    <name type="ordered locus">CBU_1675</name>
</gene>
<feature type="chain" id="PRO_0000187121" description="2-dehydro-3-deoxyphosphooctonate aldolase">
    <location>
        <begin position="1"/>
        <end position="280"/>
    </location>
</feature>
<accession>Q83B43</accession>
<keyword id="KW-0963">Cytoplasm</keyword>
<keyword id="KW-0448">Lipopolysaccharide biosynthesis</keyword>
<keyword id="KW-1185">Reference proteome</keyword>
<keyword id="KW-0808">Transferase</keyword>
<reference key="1">
    <citation type="journal article" date="2003" name="Proc. Natl. Acad. Sci. U.S.A.">
        <title>Complete genome sequence of the Q-fever pathogen, Coxiella burnetii.</title>
        <authorList>
            <person name="Seshadri R."/>
            <person name="Paulsen I.T."/>
            <person name="Eisen J.A."/>
            <person name="Read T.D."/>
            <person name="Nelson K.E."/>
            <person name="Nelson W.C."/>
            <person name="Ward N.L."/>
            <person name="Tettelin H."/>
            <person name="Davidsen T.M."/>
            <person name="Beanan M.J."/>
            <person name="DeBoy R.T."/>
            <person name="Daugherty S.C."/>
            <person name="Brinkac L.M."/>
            <person name="Madupu R."/>
            <person name="Dodson R.J."/>
            <person name="Khouri H.M."/>
            <person name="Lee K.H."/>
            <person name="Carty H.A."/>
            <person name="Scanlan D."/>
            <person name="Heinzen R.A."/>
            <person name="Thompson H.A."/>
            <person name="Samuel J.E."/>
            <person name="Fraser C.M."/>
            <person name="Heidelberg J.F."/>
        </authorList>
    </citation>
    <scope>NUCLEOTIDE SEQUENCE [LARGE SCALE GENOMIC DNA]</scope>
    <source>
        <strain>RSA 493 / Nine Mile phase I</strain>
    </source>
</reference>
<evidence type="ECO:0000255" key="1">
    <source>
        <dbReference type="HAMAP-Rule" id="MF_00056"/>
    </source>
</evidence>
<dbReference type="EC" id="2.5.1.55" evidence="1"/>
<dbReference type="EMBL" id="AE016828">
    <property type="protein sequence ID" value="AAO91171.1"/>
    <property type="molecule type" value="Genomic_DNA"/>
</dbReference>
<dbReference type="RefSeq" id="NP_820657.1">
    <property type="nucleotide sequence ID" value="NC_002971.4"/>
</dbReference>
<dbReference type="RefSeq" id="WP_010958364.1">
    <property type="nucleotide sequence ID" value="NZ_CCYB01000011.1"/>
</dbReference>
<dbReference type="SMR" id="Q83B43"/>
<dbReference type="STRING" id="227377.CBU_1675"/>
<dbReference type="EnsemblBacteria" id="AAO91171">
    <property type="protein sequence ID" value="AAO91171"/>
    <property type="gene ID" value="CBU_1675"/>
</dbReference>
<dbReference type="GeneID" id="1209586"/>
<dbReference type="KEGG" id="cbu:CBU_1675"/>
<dbReference type="PATRIC" id="fig|227377.7.peg.1664"/>
<dbReference type="eggNOG" id="COG2877">
    <property type="taxonomic scope" value="Bacteria"/>
</dbReference>
<dbReference type="HOGENOM" id="CLU_036666_0_0_6"/>
<dbReference type="OrthoDB" id="9776934at2"/>
<dbReference type="UniPathway" id="UPA00030"/>
<dbReference type="UniPathway" id="UPA00357">
    <property type="reaction ID" value="UER00474"/>
</dbReference>
<dbReference type="Proteomes" id="UP000002671">
    <property type="component" value="Chromosome"/>
</dbReference>
<dbReference type="GO" id="GO:0005829">
    <property type="term" value="C:cytosol"/>
    <property type="evidence" value="ECO:0000318"/>
    <property type="project" value="GO_Central"/>
</dbReference>
<dbReference type="GO" id="GO:0008676">
    <property type="term" value="F:3-deoxy-8-phosphooctulonate synthase activity"/>
    <property type="evidence" value="ECO:0000318"/>
    <property type="project" value="GO_Central"/>
</dbReference>
<dbReference type="GO" id="GO:0019294">
    <property type="term" value="P:keto-3-deoxy-D-manno-octulosonic acid biosynthetic process"/>
    <property type="evidence" value="ECO:0000318"/>
    <property type="project" value="GO_Central"/>
</dbReference>
<dbReference type="Gene3D" id="3.20.20.70">
    <property type="entry name" value="Aldolase class I"/>
    <property type="match status" value="1"/>
</dbReference>
<dbReference type="HAMAP" id="MF_00056">
    <property type="entry name" value="KDO8P_synth"/>
    <property type="match status" value="1"/>
</dbReference>
<dbReference type="InterPro" id="IPR013785">
    <property type="entry name" value="Aldolase_TIM"/>
</dbReference>
<dbReference type="InterPro" id="IPR006218">
    <property type="entry name" value="DAHP1/KDSA"/>
</dbReference>
<dbReference type="InterPro" id="IPR006269">
    <property type="entry name" value="KDO8P_synthase"/>
</dbReference>
<dbReference type="NCBIfam" id="TIGR01362">
    <property type="entry name" value="KDO8P_synth"/>
    <property type="match status" value="1"/>
</dbReference>
<dbReference type="NCBIfam" id="NF003543">
    <property type="entry name" value="PRK05198.1"/>
    <property type="match status" value="1"/>
</dbReference>
<dbReference type="PANTHER" id="PTHR21057">
    <property type="entry name" value="PHOSPHO-2-DEHYDRO-3-DEOXYHEPTONATE ALDOLASE"/>
    <property type="match status" value="1"/>
</dbReference>
<dbReference type="Pfam" id="PF00793">
    <property type="entry name" value="DAHP_synth_1"/>
    <property type="match status" value="1"/>
</dbReference>
<dbReference type="SUPFAM" id="SSF51569">
    <property type="entry name" value="Aldolase"/>
    <property type="match status" value="1"/>
</dbReference>
<comment type="catalytic activity">
    <reaction evidence="1">
        <text>D-arabinose 5-phosphate + phosphoenolpyruvate + H2O = 3-deoxy-alpha-D-manno-2-octulosonate-8-phosphate + phosphate</text>
        <dbReference type="Rhea" id="RHEA:14053"/>
        <dbReference type="ChEBI" id="CHEBI:15377"/>
        <dbReference type="ChEBI" id="CHEBI:43474"/>
        <dbReference type="ChEBI" id="CHEBI:57693"/>
        <dbReference type="ChEBI" id="CHEBI:58702"/>
        <dbReference type="ChEBI" id="CHEBI:85985"/>
        <dbReference type="EC" id="2.5.1.55"/>
    </reaction>
</comment>
<comment type="pathway">
    <text evidence="1">Carbohydrate biosynthesis; 3-deoxy-D-manno-octulosonate biosynthesis; 3-deoxy-D-manno-octulosonate from D-ribulose 5-phosphate: step 2/3.</text>
</comment>
<comment type="pathway">
    <text evidence="1">Bacterial outer membrane biogenesis; lipopolysaccharide biosynthesis.</text>
</comment>
<comment type="subcellular location">
    <subcellularLocation>
        <location evidence="1">Cytoplasm</location>
    </subcellularLocation>
</comment>
<comment type="similarity">
    <text evidence="1">Belongs to the KdsA family.</text>
</comment>